<keyword id="KW-0002">3D-structure</keyword>
<keyword id="KW-0007">Acetylation</keyword>
<keyword id="KW-0963">Cytoplasm</keyword>
<keyword id="KW-0903">Direct protein sequencing</keyword>
<keyword id="KW-0343">GTPase activation</keyword>
<keyword id="KW-1017">Isopeptide bond</keyword>
<keyword id="KW-0597">Phosphoprotein</keyword>
<keyword id="KW-1185">Reference proteome</keyword>
<keyword id="KW-0832">Ubl conjugation</keyword>
<sequence>MAEQEPTAEQLAQIAAENEEDEHSVNYKPPAQKSIQEIQELDKDDESLRKYKEALLGRVAVSADPNVPNVVVTRLTLVCSTAPGPLELDLTGDLESFKKQSFVLKEGVEYRIKISFRVNREIVSGMKYIQHTYRKGVKIDKTDYMVGSYGPRAEEYEFLTPMEEAPKGMLARGSYNIKSRFTDDDRTDHLSWEWNLTIKKEWKD</sequence>
<reference key="1">
    <citation type="journal article" date="1990" name="Oncogene">
        <title>Molecular cloning and characterization of a novel type of regulatory protein (GDI) for the rho proteins, ras p21-like small GTP-binding proteins.</title>
        <authorList>
            <person name="Fukumoto Y."/>
            <person name="Kaibuchi K."/>
            <person name="Hori Y."/>
            <person name="Fujioka H."/>
            <person name="Araki S."/>
            <person name="Ueda T."/>
            <person name="Kikuchi A."/>
            <person name="Takai Y."/>
        </authorList>
    </citation>
    <scope>NUCLEOTIDE SEQUENCE [MRNA]</scope>
    <scope>PARTIAL PROTEIN SEQUENCE</scope>
    <scope>FUNCTION</scope>
    <source>
        <tissue>Brain</tissue>
    </source>
</reference>
<reference key="2">
    <citation type="submission" date="2005-08" db="EMBL/GenBank/DDBJ databases">
        <authorList>
            <consortium name="NIH - Mammalian Gene Collection (MGC) project"/>
        </authorList>
    </citation>
    <scope>NUCLEOTIDE SEQUENCE [LARGE SCALE MRNA]</scope>
    <source>
        <strain>Hereford</strain>
        <tissue>Uterus</tissue>
    </source>
</reference>
<reference key="3">
    <citation type="journal article" date="1997" name="Nature">
        <title>C-terminal binding domain of Rho GDP-dissociation inhibitor directs N-terminal inhibitory peptide to GTPases.</title>
        <authorList>
            <person name="Gosser Y.Q."/>
            <person name="Nomanbhoy T.K."/>
            <person name="Aghazadeh B."/>
            <person name="Manor D."/>
            <person name="Combs C."/>
            <person name="Cerione R.A."/>
            <person name="Rosen M.K."/>
        </authorList>
    </citation>
    <scope>STRUCTURE BY NMR OF 60-204</scope>
    <scope>FUNCTION</scope>
</reference>
<gene>
    <name type="primary">ARHGDIA</name>
</gene>
<accession>P19803</accession>
<accession>Q3ZBA9</accession>
<feature type="initiator methionine" description="Removed" evidence="1">
    <location>
        <position position="1"/>
    </location>
</feature>
<feature type="chain" id="PRO_0000219011" description="Rho GDP-dissociation inhibitor 1">
    <location>
        <begin position="2"/>
        <end position="204"/>
    </location>
</feature>
<feature type="region of interest" description="Disordered" evidence="4">
    <location>
        <begin position="1"/>
        <end position="36"/>
    </location>
</feature>
<feature type="region of interest" description="Hydrophobic">
    <location>
        <begin position="66"/>
        <end position="83"/>
    </location>
</feature>
<feature type="modified residue" description="N-acetylalanine" evidence="1">
    <location>
        <position position="2"/>
    </location>
</feature>
<feature type="modified residue" description="Phosphoserine" evidence="2">
    <location>
        <position position="34"/>
    </location>
</feature>
<feature type="modified residue" description="N6-acetyllysine" evidence="2">
    <location>
        <position position="43"/>
    </location>
</feature>
<feature type="modified residue" description="Phosphoserine" evidence="1">
    <location>
        <position position="47"/>
    </location>
</feature>
<feature type="modified residue" description="Phosphoserine; by PKA" evidence="3">
    <location>
        <position position="101"/>
    </location>
</feature>
<feature type="modified residue" description="N6-acetyllysine" evidence="1">
    <location>
        <position position="105"/>
    </location>
</feature>
<feature type="modified residue" description="Phosphoserine; by PKC" evidence="3">
    <location>
        <position position="115"/>
    </location>
</feature>
<feature type="modified residue" description="N6-acetyllysine" evidence="1">
    <location>
        <position position="127"/>
    </location>
</feature>
<feature type="modified residue" description="N6-acetyllysine; alternate" evidence="1">
    <location>
        <position position="141"/>
    </location>
</feature>
<feature type="modified residue" description="N6-succinyllysine; alternate" evidence="2">
    <location>
        <position position="141"/>
    </location>
</feature>
<feature type="modified residue" description="N6-acetyllysine" evidence="1">
    <location>
        <position position="178"/>
    </location>
</feature>
<feature type="cross-link" description="Glycyl lysine isopeptide (Lys-Gly) (interchain with G-Cter in SUMO1); alternate" evidence="1">
    <location>
        <position position="138"/>
    </location>
</feature>
<feature type="cross-link" description="Glycyl lysine isopeptide (Lys-Gly) (interchain with G-Cter in SUMO2); alternate" evidence="1">
    <location>
        <position position="138"/>
    </location>
</feature>
<feature type="cross-link" description="Glycyl lysine isopeptide (Lys-Gly) (interchain with G-Cter in SUMO1); alternate" evidence="1">
    <location>
        <position position="141"/>
    </location>
</feature>
<feature type="cross-link" description="Glycyl lysine isopeptide (Lys-Gly) (interchain with G-Cter in SUMO2); alternate" evidence="1">
    <location>
        <position position="141"/>
    </location>
</feature>
<feature type="turn" evidence="9">
    <location>
        <begin position="10"/>
        <end position="14"/>
    </location>
</feature>
<feature type="strand" evidence="9">
    <location>
        <begin position="16"/>
        <end position="20"/>
    </location>
</feature>
<feature type="helix" evidence="9">
    <location>
        <begin position="35"/>
        <end position="40"/>
    </location>
</feature>
<feature type="turn" evidence="9">
    <location>
        <begin position="41"/>
        <end position="44"/>
    </location>
</feature>
<feature type="helix" evidence="9">
    <location>
        <begin position="46"/>
        <end position="56"/>
    </location>
</feature>
<feature type="strand" evidence="9">
    <location>
        <begin position="74"/>
        <end position="78"/>
    </location>
</feature>
<feature type="strand" evidence="8">
    <location>
        <begin position="80"/>
        <end position="84"/>
    </location>
</feature>
<feature type="strand" evidence="9">
    <location>
        <begin position="87"/>
        <end position="89"/>
    </location>
</feature>
<feature type="helix" evidence="9">
    <location>
        <begin position="95"/>
        <end position="99"/>
    </location>
</feature>
<feature type="strand" evidence="9">
    <location>
        <begin position="102"/>
        <end position="105"/>
    </location>
</feature>
<feature type="strand" evidence="9">
    <location>
        <begin position="109"/>
        <end position="116"/>
    </location>
</feature>
<feature type="strand" evidence="9">
    <location>
        <begin position="123"/>
        <end position="134"/>
    </location>
</feature>
<feature type="strand" evidence="9">
    <location>
        <begin position="137"/>
        <end position="149"/>
    </location>
</feature>
<feature type="strand" evidence="9">
    <location>
        <begin position="156"/>
        <end position="159"/>
    </location>
</feature>
<feature type="strand" evidence="10">
    <location>
        <begin position="160"/>
        <end position="164"/>
    </location>
</feature>
<feature type="helix" evidence="11">
    <location>
        <begin position="169"/>
        <end position="171"/>
    </location>
</feature>
<feature type="strand" evidence="9">
    <location>
        <begin position="173"/>
        <end position="182"/>
    </location>
</feature>
<feature type="strand" evidence="8">
    <location>
        <begin position="183"/>
        <end position="187"/>
    </location>
</feature>
<feature type="strand" evidence="9">
    <location>
        <begin position="190"/>
        <end position="201"/>
    </location>
</feature>
<protein>
    <recommendedName>
        <fullName>Rho GDP-dissociation inhibitor 1</fullName>
        <shortName>Rho GDI 1</shortName>
    </recommendedName>
    <alternativeName>
        <fullName>Rho-GDI alpha</fullName>
    </alternativeName>
</protein>
<evidence type="ECO:0000250" key="1">
    <source>
        <dbReference type="UniProtKB" id="P52565"/>
    </source>
</evidence>
<evidence type="ECO:0000250" key="2">
    <source>
        <dbReference type="UniProtKB" id="Q99PT1"/>
    </source>
</evidence>
<evidence type="ECO:0000255" key="3"/>
<evidence type="ECO:0000256" key="4">
    <source>
        <dbReference type="SAM" id="MobiDB-lite"/>
    </source>
</evidence>
<evidence type="ECO:0000269" key="5">
    <source>
    </source>
</evidence>
<evidence type="ECO:0000269" key="6">
    <source>
    </source>
</evidence>
<evidence type="ECO:0000305" key="7"/>
<evidence type="ECO:0007829" key="8">
    <source>
        <dbReference type="PDB" id="1AJW"/>
    </source>
</evidence>
<evidence type="ECO:0007829" key="9">
    <source>
        <dbReference type="PDB" id="1DOA"/>
    </source>
</evidence>
<evidence type="ECO:0007829" key="10">
    <source>
        <dbReference type="PDB" id="1GDF"/>
    </source>
</evidence>
<evidence type="ECO:0007829" key="11">
    <source>
        <dbReference type="PDB" id="5FR1"/>
    </source>
</evidence>
<dbReference type="EMBL" id="X52689">
    <property type="protein sequence ID" value="CAA36916.1"/>
    <property type="molecule type" value="mRNA"/>
</dbReference>
<dbReference type="EMBL" id="BC103465">
    <property type="protein sequence ID" value="AAI03466.1"/>
    <property type="molecule type" value="mRNA"/>
</dbReference>
<dbReference type="PIR" id="S12121">
    <property type="entry name" value="S12121"/>
</dbReference>
<dbReference type="RefSeq" id="NP_788823.1">
    <property type="nucleotide sequence ID" value="NM_176650.3"/>
</dbReference>
<dbReference type="RefSeq" id="XP_005221068.2">
    <property type="nucleotide sequence ID" value="XM_005221011.5"/>
</dbReference>
<dbReference type="RefSeq" id="XP_059733741.1">
    <property type="nucleotide sequence ID" value="XM_059877758.1"/>
</dbReference>
<dbReference type="PDB" id="1AJW">
    <property type="method" value="NMR"/>
    <property type="chains" value="A=60-204"/>
</dbReference>
<dbReference type="PDB" id="1DOA">
    <property type="method" value="X-ray"/>
    <property type="resolution" value="2.60 A"/>
    <property type="chains" value="B=1-204"/>
</dbReference>
<dbReference type="PDB" id="1GDF">
    <property type="method" value="NMR"/>
    <property type="chains" value="A=60-204"/>
</dbReference>
<dbReference type="PDB" id="5FR1">
    <property type="method" value="X-ray"/>
    <property type="resolution" value="2.75 A"/>
    <property type="chains" value="B=1-204"/>
</dbReference>
<dbReference type="PDB" id="5FR2">
    <property type="method" value="X-ray"/>
    <property type="resolution" value="3.35 A"/>
    <property type="chains" value="B=1-204"/>
</dbReference>
<dbReference type="PDBsum" id="1AJW"/>
<dbReference type="PDBsum" id="1DOA"/>
<dbReference type="PDBsum" id="1GDF"/>
<dbReference type="PDBsum" id="5FR1"/>
<dbReference type="PDBsum" id="5FR2"/>
<dbReference type="SMR" id="P19803"/>
<dbReference type="FunCoup" id="P19803">
    <property type="interactions" value="2466"/>
</dbReference>
<dbReference type="MINT" id="P19803"/>
<dbReference type="STRING" id="9913.ENSBTAP00000040280"/>
<dbReference type="PaxDb" id="9913-ENSBTAP00000040280"/>
<dbReference type="PeptideAtlas" id="P19803"/>
<dbReference type="GeneID" id="338054"/>
<dbReference type="KEGG" id="bta:338054"/>
<dbReference type="CTD" id="396"/>
<dbReference type="eggNOG" id="KOG3205">
    <property type="taxonomic scope" value="Eukaryota"/>
</dbReference>
<dbReference type="HOGENOM" id="CLU_076228_1_1_1"/>
<dbReference type="InParanoid" id="P19803"/>
<dbReference type="OrthoDB" id="1683373at2759"/>
<dbReference type="TreeFam" id="TF105387"/>
<dbReference type="EvolutionaryTrace" id="P19803"/>
<dbReference type="Proteomes" id="UP000009136">
    <property type="component" value="Unplaced"/>
</dbReference>
<dbReference type="GO" id="GO:0005829">
    <property type="term" value="C:cytosol"/>
    <property type="evidence" value="ECO:0000318"/>
    <property type="project" value="GO_Central"/>
</dbReference>
<dbReference type="GO" id="GO:0001772">
    <property type="term" value="C:immunological synapse"/>
    <property type="evidence" value="ECO:0000250"/>
    <property type="project" value="AgBase"/>
</dbReference>
<dbReference type="GO" id="GO:0016020">
    <property type="term" value="C:membrane"/>
    <property type="evidence" value="ECO:0000318"/>
    <property type="project" value="GO_Central"/>
</dbReference>
<dbReference type="GO" id="GO:0005096">
    <property type="term" value="F:GTPase activator activity"/>
    <property type="evidence" value="ECO:0007669"/>
    <property type="project" value="UniProtKB-KW"/>
</dbReference>
<dbReference type="GO" id="GO:0005094">
    <property type="term" value="F:Rho GDP-dissociation inhibitor activity"/>
    <property type="evidence" value="ECO:0000250"/>
    <property type="project" value="AgBase"/>
</dbReference>
<dbReference type="GO" id="GO:0007266">
    <property type="term" value="P:Rho protein signal transduction"/>
    <property type="evidence" value="ECO:0000250"/>
    <property type="project" value="AgBase"/>
</dbReference>
<dbReference type="GO" id="GO:0071526">
    <property type="term" value="P:semaphorin-plexin signaling pathway"/>
    <property type="evidence" value="ECO:0000250"/>
    <property type="project" value="UniProtKB"/>
</dbReference>
<dbReference type="FunFam" id="2.70.50.30:FF:000004">
    <property type="entry name" value="Rho GDP-dissociation inhibitor 1"/>
    <property type="match status" value="1"/>
</dbReference>
<dbReference type="Gene3D" id="2.70.50.30">
    <property type="entry name" value="Coagulation Factor XIII, subunit A, domain 1"/>
    <property type="match status" value="1"/>
</dbReference>
<dbReference type="IDEAL" id="IID50041"/>
<dbReference type="InterPro" id="IPR014756">
    <property type="entry name" value="Ig_E-set"/>
</dbReference>
<dbReference type="InterPro" id="IPR000406">
    <property type="entry name" value="Rho_GDI"/>
</dbReference>
<dbReference type="InterPro" id="IPR024792">
    <property type="entry name" value="RhoGDI_dom_sf"/>
</dbReference>
<dbReference type="PANTHER" id="PTHR10980">
    <property type="entry name" value="RHO GDP-DISSOCIATION INHIBITOR"/>
    <property type="match status" value="1"/>
</dbReference>
<dbReference type="PANTHER" id="PTHR10980:SF9">
    <property type="entry name" value="RHO GDP-DISSOCIATION INHIBITOR 1"/>
    <property type="match status" value="1"/>
</dbReference>
<dbReference type="Pfam" id="PF02115">
    <property type="entry name" value="Rho_GDI"/>
    <property type="match status" value="1"/>
</dbReference>
<dbReference type="PRINTS" id="PR00492">
    <property type="entry name" value="RHOGDI"/>
</dbReference>
<dbReference type="SUPFAM" id="SSF81296">
    <property type="entry name" value="E set domains"/>
    <property type="match status" value="1"/>
</dbReference>
<comment type="function">
    <text evidence="1 2 5 6">Controls Rho proteins homeostasis. Regulates the GDP/GTP exchange reaction of the Rho proteins by inhibiting the dissociation of GDP from them, and the subsequent binding of GTP to them. Retains Rho proteins such as CDC42, RAC1 and RHOA in an inactive cytosolic pool, regulating their stability and protecting them from degradation. Actively involved in the recycling and distribution of activated Rho GTPases in the cell, mediates extraction from membranes of both inactive and activated molecules due its exceptionally high affinity for prenylated forms. Through the modulation of Rho proteins, may play a role in cell motility regulation. In glioma cells, inhibits cell migration and invasion by mediating the signals of SEMA5A and PLXNB3 that lead to inactivation of RAC1.</text>
</comment>
<comment type="subunit">
    <text evidence="1 2">Monomer (By similarity). Interacts with FER (By similarity). Interacts with PLXNB3 (By similarity). Forms a heterodimer with RAC1. Interacts with RHOA, the affinity is increased by three orders of magnitude when RHOA is prenylated. Interacts with PSMD10; the interaction increases ARHGDIA association with RHOA, leading to ARHGDIA-mediated inactivation of RHOA and ROCK and prolonged AKT activation. Interacts with KANK2; the interaction is direct and may regulate the interaction of ARHGDIA with RHOA, RAC1 and CDC42. Interacts with RHOC. Interacts with CDC42 (By similarity). Interacts with NGFR (via death domain); NGFR binding decreases the affinity for RHOA (By similarity).</text>
</comment>
<comment type="subcellular location">
    <subcellularLocation>
        <location evidence="1">Cytoplasm</location>
    </subcellularLocation>
</comment>
<comment type="tissue specificity">
    <text>Brain, lung, thymus, spleen, small intestine, and kidney, and weakly in heart and liver.</text>
</comment>
<comment type="similarity">
    <text evidence="7">Belongs to the Rho GDI family.</text>
</comment>
<organism>
    <name type="scientific">Bos taurus</name>
    <name type="common">Bovine</name>
    <dbReference type="NCBI Taxonomy" id="9913"/>
    <lineage>
        <taxon>Eukaryota</taxon>
        <taxon>Metazoa</taxon>
        <taxon>Chordata</taxon>
        <taxon>Craniata</taxon>
        <taxon>Vertebrata</taxon>
        <taxon>Euteleostomi</taxon>
        <taxon>Mammalia</taxon>
        <taxon>Eutheria</taxon>
        <taxon>Laurasiatheria</taxon>
        <taxon>Artiodactyla</taxon>
        <taxon>Ruminantia</taxon>
        <taxon>Pecora</taxon>
        <taxon>Bovidae</taxon>
        <taxon>Bovinae</taxon>
        <taxon>Bos</taxon>
    </lineage>
</organism>
<proteinExistence type="evidence at protein level"/>
<name>GDIR1_BOVIN</name>